<evidence type="ECO:0000250" key="1"/>
<evidence type="ECO:0000255" key="2">
    <source>
        <dbReference type="HAMAP-Rule" id="MF_00118"/>
    </source>
</evidence>
<proteinExistence type="inferred from homology"/>
<comment type="function">
    <text evidence="2">GTP hydrolase that promotes the GTP-dependent binding of aminoacyl-tRNA to the A-site of ribosomes during protein biosynthesis.</text>
</comment>
<comment type="catalytic activity">
    <reaction evidence="2">
        <text>GTP + H2O = GDP + phosphate + H(+)</text>
        <dbReference type="Rhea" id="RHEA:19669"/>
        <dbReference type="ChEBI" id="CHEBI:15377"/>
        <dbReference type="ChEBI" id="CHEBI:15378"/>
        <dbReference type="ChEBI" id="CHEBI:37565"/>
        <dbReference type="ChEBI" id="CHEBI:43474"/>
        <dbReference type="ChEBI" id="CHEBI:58189"/>
        <dbReference type="EC" id="3.6.5.3"/>
    </reaction>
    <physiologicalReaction direction="left-to-right" evidence="2">
        <dbReference type="Rhea" id="RHEA:19670"/>
    </physiologicalReaction>
</comment>
<comment type="subunit">
    <text evidence="2">Monomer.</text>
</comment>
<comment type="subcellular location">
    <subcellularLocation>
        <location evidence="2">Cytoplasm</location>
    </subcellularLocation>
</comment>
<comment type="similarity">
    <text evidence="2">Belongs to the TRAFAC class translation factor GTPase superfamily. Classic translation factor GTPase family. EF-Tu/EF-1A subfamily.</text>
</comment>
<dbReference type="EC" id="3.6.5.3" evidence="2"/>
<dbReference type="EMBL" id="CP000088">
    <property type="protein sequence ID" value="AAZ56681.1"/>
    <property type="molecule type" value="Genomic_DNA"/>
</dbReference>
<dbReference type="RefSeq" id="WP_011293071.1">
    <property type="nucleotide sequence ID" value="NC_007333.1"/>
</dbReference>
<dbReference type="SMR" id="Q47LJ1"/>
<dbReference type="STRING" id="269800.Tfu_2648"/>
<dbReference type="KEGG" id="tfu:Tfu_2648"/>
<dbReference type="eggNOG" id="COG0050">
    <property type="taxonomic scope" value="Bacteria"/>
</dbReference>
<dbReference type="HOGENOM" id="CLU_007265_0_1_11"/>
<dbReference type="OrthoDB" id="9803139at2"/>
<dbReference type="GO" id="GO:0005829">
    <property type="term" value="C:cytosol"/>
    <property type="evidence" value="ECO:0007669"/>
    <property type="project" value="TreeGrafter"/>
</dbReference>
<dbReference type="GO" id="GO:0005525">
    <property type="term" value="F:GTP binding"/>
    <property type="evidence" value="ECO:0007669"/>
    <property type="project" value="UniProtKB-UniRule"/>
</dbReference>
<dbReference type="GO" id="GO:0003924">
    <property type="term" value="F:GTPase activity"/>
    <property type="evidence" value="ECO:0007669"/>
    <property type="project" value="InterPro"/>
</dbReference>
<dbReference type="GO" id="GO:0003746">
    <property type="term" value="F:translation elongation factor activity"/>
    <property type="evidence" value="ECO:0007669"/>
    <property type="project" value="UniProtKB-UniRule"/>
</dbReference>
<dbReference type="CDD" id="cd01884">
    <property type="entry name" value="EF_Tu"/>
    <property type="match status" value="1"/>
</dbReference>
<dbReference type="CDD" id="cd03697">
    <property type="entry name" value="EFTU_II"/>
    <property type="match status" value="1"/>
</dbReference>
<dbReference type="CDD" id="cd03707">
    <property type="entry name" value="EFTU_III"/>
    <property type="match status" value="1"/>
</dbReference>
<dbReference type="FunFam" id="2.40.30.10:FF:000001">
    <property type="entry name" value="Elongation factor Tu"/>
    <property type="match status" value="1"/>
</dbReference>
<dbReference type="FunFam" id="3.40.50.300:FF:000003">
    <property type="entry name" value="Elongation factor Tu"/>
    <property type="match status" value="1"/>
</dbReference>
<dbReference type="Gene3D" id="3.40.50.300">
    <property type="entry name" value="P-loop containing nucleotide triphosphate hydrolases"/>
    <property type="match status" value="1"/>
</dbReference>
<dbReference type="Gene3D" id="2.40.30.10">
    <property type="entry name" value="Translation factors"/>
    <property type="match status" value="2"/>
</dbReference>
<dbReference type="HAMAP" id="MF_00118_B">
    <property type="entry name" value="EF_Tu_B"/>
    <property type="match status" value="1"/>
</dbReference>
<dbReference type="InterPro" id="IPR041709">
    <property type="entry name" value="EF-Tu_GTP-bd"/>
</dbReference>
<dbReference type="InterPro" id="IPR050055">
    <property type="entry name" value="EF-Tu_GTPase"/>
</dbReference>
<dbReference type="InterPro" id="IPR004161">
    <property type="entry name" value="EFTu-like_2"/>
</dbReference>
<dbReference type="InterPro" id="IPR033720">
    <property type="entry name" value="EFTU_2"/>
</dbReference>
<dbReference type="InterPro" id="IPR031157">
    <property type="entry name" value="G_TR_CS"/>
</dbReference>
<dbReference type="InterPro" id="IPR027417">
    <property type="entry name" value="P-loop_NTPase"/>
</dbReference>
<dbReference type="InterPro" id="IPR005225">
    <property type="entry name" value="Small_GTP-bd"/>
</dbReference>
<dbReference type="InterPro" id="IPR000795">
    <property type="entry name" value="T_Tr_GTP-bd_dom"/>
</dbReference>
<dbReference type="InterPro" id="IPR009000">
    <property type="entry name" value="Transl_B-barrel_sf"/>
</dbReference>
<dbReference type="InterPro" id="IPR009001">
    <property type="entry name" value="Transl_elong_EF1A/Init_IF2_C"/>
</dbReference>
<dbReference type="InterPro" id="IPR004541">
    <property type="entry name" value="Transl_elong_EFTu/EF1A_bac/org"/>
</dbReference>
<dbReference type="InterPro" id="IPR004160">
    <property type="entry name" value="Transl_elong_EFTu/EF1A_C"/>
</dbReference>
<dbReference type="NCBIfam" id="TIGR00485">
    <property type="entry name" value="EF-Tu"/>
    <property type="match status" value="1"/>
</dbReference>
<dbReference type="NCBIfam" id="NF000766">
    <property type="entry name" value="PRK00049.1"/>
    <property type="match status" value="1"/>
</dbReference>
<dbReference type="NCBIfam" id="NF009372">
    <property type="entry name" value="PRK12735.1"/>
    <property type="match status" value="1"/>
</dbReference>
<dbReference type="NCBIfam" id="NF009373">
    <property type="entry name" value="PRK12736.1"/>
    <property type="match status" value="1"/>
</dbReference>
<dbReference type="NCBIfam" id="TIGR00231">
    <property type="entry name" value="small_GTP"/>
    <property type="match status" value="1"/>
</dbReference>
<dbReference type="PANTHER" id="PTHR43721:SF22">
    <property type="entry name" value="ELONGATION FACTOR TU, MITOCHONDRIAL"/>
    <property type="match status" value="1"/>
</dbReference>
<dbReference type="PANTHER" id="PTHR43721">
    <property type="entry name" value="ELONGATION FACTOR TU-RELATED"/>
    <property type="match status" value="1"/>
</dbReference>
<dbReference type="Pfam" id="PF00009">
    <property type="entry name" value="GTP_EFTU"/>
    <property type="match status" value="1"/>
</dbReference>
<dbReference type="Pfam" id="PF03144">
    <property type="entry name" value="GTP_EFTU_D2"/>
    <property type="match status" value="1"/>
</dbReference>
<dbReference type="Pfam" id="PF03143">
    <property type="entry name" value="GTP_EFTU_D3"/>
    <property type="match status" value="1"/>
</dbReference>
<dbReference type="PRINTS" id="PR00315">
    <property type="entry name" value="ELONGATNFCT"/>
</dbReference>
<dbReference type="SUPFAM" id="SSF50465">
    <property type="entry name" value="EF-Tu/eEF-1alpha/eIF2-gamma C-terminal domain"/>
    <property type="match status" value="1"/>
</dbReference>
<dbReference type="SUPFAM" id="SSF52540">
    <property type="entry name" value="P-loop containing nucleoside triphosphate hydrolases"/>
    <property type="match status" value="1"/>
</dbReference>
<dbReference type="SUPFAM" id="SSF50447">
    <property type="entry name" value="Translation proteins"/>
    <property type="match status" value="1"/>
</dbReference>
<dbReference type="PROSITE" id="PS00301">
    <property type="entry name" value="G_TR_1"/>
    <property type="match status" value="1"/>
</dbReference>
<dbReference type="PROSITE" id="PS51722">
    <property type="entry name" value="G_TR_2"/>
    <property type="match status" value="1"/>
</dbReference>
<gene>
    <name evidence="2" type="primary">tuf</name>
    <name type="ordered locus">Tfu_2648</name>
</gene>
<name>EFTU_THEFY</name>
<protein>
    <recommendedName>
        <fullName evidence="2">Elongation factor Tu</fullName>
        <shortName evidence="2">EF-Tu</shortName>
        <ecNumber evidence="2">3.6.5.3</ecNumber>
    </recommendedName>
</protein>
<sequence length="397" mass="44019">MAKAKFERTKPHVNIGTIGHIDHGKTTLTAAITKVLHDKYPDLNPFTPFEDIDKAPEERERGITISISHVEYQTESRHYAHVDCPGHADYVKNMITGAAQMDGAILVVAATDGPMPQTKEHVLLARQVGVPYIVVALNKSDMVDDEEIFDLVELEVRELLNEYEFPGDEVPVIRVSALKALEGDPEWGKKILELMEAVDQNIPEPQRDIDKPFLMPIEDVFSITGRGTVVTGRIERGVINVNDTVEIVGLKDDKITTTVTGVEMFRKLLDQGQAGDNVGLLLRGVKREEVERGQVVIKPGTTTPHTEFEAQVVILSKDEGGRHTPFFNNYRPQFYFRTTDVTGVVTLPEGTEMVMPGDNTSMTVKLIQPVAMEEGLKFAIREGGRTVGAGRVTKIIK</sequence>
<organism>
    <name type="scientific">Thermobifida fusca (strain YX)</name>
    <dbReference type="NCBI Taxonomy" id="269800"/>
    <lineage>
        <taxon>Bacteria</taxon>
        <taxon>Bacillati</taxon>
        <taxon>Actinomycetota</taxon>
        <taxon>Actinomycetes</taxon>
        <taxon>Streptosporangiales</taxon>
        <taxon>Nocardiopsidaceae</taxon>
        <taxon>Thermobifida</taxon>
    </lineage>
</organism>
<accession>Q47LJ1</accession>
<keyword id="KW-0963">Cytoplasm</keyword>
<keyword id="KW-0251">Elongation factor</keyword>
<keyword id="KW-0342">GTP-binding</keyword>
<keyword id="KW-0378">Hydrolase</keyword>
<keyword id="KW-0460">Magnesium</keyword>
<keyword id="KW-0479">Metal-binding</keyword>
<keyword id="KW-0547">Nucleotide-binding</keyword>
<keyword id="KW-0648">Protein biosynthesis</keyword>
<feature type="chain" id="PRO_1000015776" description="Elongation factor Tu">
    <location>
        <begin position="1"/>
        <end position="397"/>
    </location>
</feature>
<feature type="domain" description="tr-type G">
    <location>
        <begin position="10"/>
        <end position="206"/>
    </location>
</feature>
<feature type="region of interest" description="G1" evidence="1">
    <location>
        <begin position="19"/>
        <end position="26"/>
    </location>
</feature>
<feature type="region of interest" description="G2" evidence="1">
    <location>
        <begin position="62"/>
        <end position="66"/>
    </location>
</feature>
<feature type="region of interest" description="G3" evidence="1">
    <location>
        <begin position="83"/>
        <end position="86"/>
    </location>
</feature>
<feature type="region of interest" description="G4" evidence="1">
    <location>
        <begin position="138"/>
        <end position="141"/>
    </location>
</feature>
<feature type="region of interest" description="G5" evidence="1">
    <location>
        <begin position="176"/>
        <end position="178"/>
    </location>
</feature>
<feature type="binding site" evidence="2">
    <location>
        <begin position="19"/>
        <end position="26"/>
    </location>
    <ligand>
        <name>GTP</name>
        <dbReference type="ChEBI" id="CHEBI:37565"/>
    </ligand>
</feature>
<feature type="binding site" evidence="2">
    <location>
        <position position="26"/>
    </location>
    <ligand>
        <name>Mg(2+)</name>
        <dbReference type="ChEBI" id="CHEBI:18420"/>
    </ligand>
</feature>
<feature type="binding site" evidence="2">
    <location>
        <begin position="83"/>
        <end position="87"/>
    </location>
    <ligand>
        <name>GTP</name>
        <dbReference type="ChEBI" id="CHEBI:37565"/>
    </ligand>
</feature>
<feature type="binding site" evidence="2">
    <location>
        <begin position="138"/>
        <end position="141"/>
    </location>
    <ligand>
        <name>GTP</name>
        <dbReference type="ChEBI" id="CHEBI:37565"/>
    </ligand>
</feature>
<reference key="1">
    <citation type="journal article" date="2007" name="J. Bacteriol.">
        <title>Genome sequence and analysis of the soil cellulolytic actinomycete Thermobifida fusca YX.</title>
        <authorList>
            <person name="Lykidis A."/>
            <person name="Mavromatis K."/>
            <person name="Ivanova N."/>
            <person name="Anderson I."/>
            <person name="Land M."/>
            <person name="DiBartolo G."/>
            <person name="Martinez M."/>
            <person name="Lapidus A."/>
            <person name="Lucas S."/>
            <person name="Copeland A."/>
            <person name="Richardson P."/>
            <person name="Wilson D.B."/>
            <person name="Kyrpides N."/>
        </authorList>
    </citation>
    <scope>NUCLEOTIDE SEQUENCE [LARGE SCALE GENOMIC DNA]</scope>
    <source>
        <strain>YX</strain>
    </source>
</reference>